<feature type="chain" id="PRO_0000289737" description="sn-glycerol-3-phosphate import ATP-binding protein UgpC">
    <location>
        <begin position="1"/>
        <end position="351"/>
    </location>
</feature>
<feature type="domain" description="ABC transporter" evidence="1">
    <location>
        <begin position="4"/>
        <end position="235"/>
    </location>
</feature>
<feature type="binding site" evidence="1">
    <location>
        <begin position="37"/>
        <end position="44"/>
    </location>
    <ligand>
        <name>ATP</name>
        <dbReference type="ChEBI" id="CHEBI:30616"/>
    </ligand>
</feature>
<accession>Q8FW07</accession>
<accession>G0KD35</accession>
<gene>
    <name evidence="1" type="primary">ugpC</name>
    <name type="ordered locus">BRA0658</name>
    <name type="ordered locus">BS1330_II0652</name>
</gene>
<evidence type="ECO:0000255" key="1">
    <source>
        <dbReference type="HAMAP-Rule" id="MF_01727"/>
    </source>
</evidence>
<organism>
    <name type="scientific">Brucella suis biovar 1 (strain 1330)</name>
    <dbReference type="NCBI Taxonomy" id="204722"/>
    <lineage>
        <taxon>Bacteria</taxon>
        <taxon>Pseudomonadati</taxon>
        <taxon>Pseudomonadota</taxon>
        <taxon>Alphaproteobacteria</taxon>
        <taxon>Hyphomicrobiales</taxon>
        <taxon>Brucellaceae</taxon>
        <taxon>Brucella/Ochrobactrum group</taxon>
        <taxon>Brucella</taxon>
    </lineage>
</organism>
<comment type="function">
    <text evidence="1">Part of the ABC transporter complex UgpBAEC involved in sn-glycerol-3-phosphate (G3P) import. Responsible for energy coupling to the transport system.</text>
</comment>
<comment type="catalytic activity">
    <reaction evidence="1">
        <text>sn-glycerol 3-phosphate(out) + ATP + H2O = sn-glycerol 3-phosphate(in) + ADP + phosphate + H(+)</text>
        <dbReference type="Rhea" id="RHEA:21668"/>
        <dbReference type="ChEBI" id="CHEBI:15377"/>
        <dbReference type="ChEBI" id="CHEBI:15378"/>
        <dbReference type="ChEBI" id="CHEBI:30616"/>
        <dbReference type="ChEBI" id="CHEBI:43474"/>
        <dbReference type="ChEBI" id="CHEBI:57597"/>
        <dbReference type="ChEBI" id="CHEBI:456216"/>
        <dbReference type="EC" id="7.6.2.10"/>
    </reaction>
</comment>
<comment type="subunit">
    <text evidence="1">The complex is composed of two ATP-binding proteins (UgpC), two transmembrane proteins (UgpA and UgpE) and a solute-binding protein (UgpB).</text>
</comment>
<comment type="subcellular location">
    <subcellularLocation>
        <location evidence="1">Cell inner membrane</location>
        <topology evidence="1">Peripheral membrane protein</topology>
    </subcellularLocation>
</comment>
<comment type="similarity">
    <text evidence="1">Belongs to the ABC transporter superfamily. sn-glycerol-3-phosphate importer (TC 3.A.1.1.3) family.</text>
</comment>
<keyword id="KW-0067">ATP-binding</keyword>
<keyword id="KW-0997">Cell inner membrane</keyword>
<keyword id="KW-1003">Cell membrane</keyword>
<keyword id="KW-0472">Membrane</keyword>
<keyword id="KW-0547">Nucleotide-binding</keyword>
<keyword id="KW-0762">Sugar transport</keyword>
<keyword id="KW-1278">Translocase</keyword>
<keyword id="KW-0813">Transport</keyword>
<protein>
    <recommendedName>
        <fullName evidence="1">sn-glycerol-3-phosphate import ATP-binding protein UgpC</fullName>
        <ecNumber evidence="1">7.6.2.10</ecNumber>
    </recommendedName>
</protein>
<name>UGPC_BRUSU</name>
<proteinExistence type="inferred from homology"/>
<reference key="1">
    <citation type="journal article" date="2002" name="Proc. Natl. Acad. Sci. U.S.A.">
        <title>The Brucella suis genome reveals fundamental similarities between animal and plant pathogens and symbionts.</title>
        <authorList>
            <person name="Paulsen I.T."/>
            <person name="Seshadri R."/>
            <person name="Nelson K.E."/>
            <person name="Eisen J.A."/>
            <person name="Heidelberg J.F."/>
            <person name="Read T.D."/>
            <person name="Dodson R.J."/>
            <person name="Umayam L.A."/>
            <person name="Brinkac L.M."/>
            <person name="Beanan M.J."/>
            <person name="Daugherty S.C."/>
            <person name="DeBoy R.T."/>
            <person name="Durkin A.S."/>
            <person name="Kolonay J.F."/>
            <person name="Madupu R."/>
            <person name="Nelson W.C."/>
            <person name="Ayodeji B."/>
            <person name="Kraul M."/>
            <person name="Shetty J."/>
            <person name="Malek J.A."/>
            <person name="Van Aken S.E."/>
            <person name="Riedmuller S."/>
            <person name="Tettelin H."/>
            <person name="Gill S.R."/>
            <person name="White O."/>
            <person name="Salzberg S.L."/>
            <person name="Hoover D.L."/>
            <person name="Lindler L.E."/>
            <person name="Halling S.M."/>
            <person name="Boyle S.M."/>
            <person name="Fraser C.M."/>
        </authorList>
    </citation>
    <scope>NUCLEOTIDE SEQUENCE [LARGE SCALE GENOMIC DNA]</scope>
    <source>
        <strain>1330</strain>
    </source>
</reference>
<reference key="2">
    <citation type="journal article" date="2011" name="J. Bacteriol.">
        <title>Revised genome sequence of Brucella suis 1330.</title>
        <authorList>
            <person name="Tae H."/>
            <person name="Shallom S."/>
            <person name="Settlage R."/>
            <person name="Preston D."/>
            <person name="Adams L.G."/>
            <person name="Garner H.R."/>
        </authorList>
    </citation>
    <scope>NUCLEOTIDE SEQUENCE [LARGE SCALE GENOMIC DNA]</scope>
    <source>
        <strain>1330</strain>
    </source>
</reference>
<dbReference type="EC" id="7.6.2.10" evidence="1"/>
<dbReference type="EMBL" id="AE014292">
    <property type="protein sequence ID" value="AAN33847.1"/>
    <property type="molecule type" value="Genomic_DNA"/>
</dbReference>
<dbReference type="EMBL" id="CP002998">
    <property type="protein sequence ID" value="AEM20123.1"/>
    <property type="molecule type" value="Genomic_DNA"/>
</dbReference>
<dbReference type="RefSeq" id="WP_002967281.1">
    <property type="nucleotide sequence ID" value="NZ_KN046805.1"/>
</dbReference>
<dbReference type="SMR" id="Q8FW07"/>
<dbReference type="KEGG" id="bms:BRA0658"/>
<dbReference type="KEGG" id="bsi:BS1330_II0652"/>
<dbReference type="PATRIC" id="fig|204722.21.peg.476"/>
<dbReference type="HOGENOM" id="CLU_000604_1_1_5"/>
<dbReference type="PhylomeDB" id="Q8FW07"/>
<dbReference type="Proteomes" id="UP000007104">
    <property type="component" value="Chromosome II"/>
</dbReference>
<dbReference type="GO" id="GO:0055052">
    <property type="term" value="C:ATP-binding cassette (ABC) transporter complex, substrate-binding subunit-containing"/>
    <property type="evidence" value="ECO:0007669"/>
    <property type="project" value="TreeGrafter"/>
</dbReference>
<dbReference type="GO" id="GO:0015430">
    <property type="term" value="F:ABC-type glycerol-3-phosphate transporter activity"/>
    <property type="evidence" value="ECO:0007669"/>
    <property type="project" value="UniProtKB-EC"/>
</dbReference>
<dbReference type="GO" id="GO:0005524">
    <property type="term" value="F:ATP binding"/>
    <property type="evidence" value="ECO:0007669"/>
    <property type="project" value="UniProtKB-KW"/>
</dbReference>
<dbReference type="GO" id="GO:0016887">
    <property type="term" value="F:ATP hydrolysis activity"/>
    <property type="evidence" value="ECO:0007669"/>
    <property type="project" value="InterPro"/>
</dbReference>
<dbReference type="GO" id="GO:0008643">
    <property type="term" value="P:carbohydrate transport"/>
    <property type="evidence" value="ECO:0007669"/>
    <property type="project" value="InterPro"/>
</dbReference>
<dbReference type="GO" id="GO:0001407">
    <property type="term" value="P:glycerophosphodiester transmembrane transport"/>
    <property type="evidence" value="ECO:0007669"/>
    <property type="project" value="TreeGrafter"/>
</dbReference>
<dbReference type="CDD" id="cd03301">
    <property type="entry name" value="ABC_MalK_N"/>
    <property type="match status" value="1"/>
</dbReference>
<dbReference type="FunFam" id="3.40.50.300:FF:000042">
    <property type="entry name" value="Maltose/maltodextrin ABC transporter, ATP-binding protein"/>
    <property type="match status" value="1"/>
</dbReference>
<dbReference type="Gene3D" id="2.40.50.100">
    <property type="match status" value="1"/>
</dbReference>
<dbReference type="Gene3D" id="2.40.50.140">
    <property type="entry name" value="Nucleic acid-binding proteins"/>
    <property type="match status" value="1"/>
</dbReference>
<dbReference type="Gene3D" id="3.40.50.300">
    <property type="entry name" value="P-loop containing nucleotide triphosphate hydrolases"/>
    <property type="match status" value="1"/>
</dbReference>
<dbReference type="InterPro" id="IPR003593">
    <property type="entry name" value="AAA+_ATPase"/>
</dbReference>
<dbReference type="InterPro" id="IPR003439">
    <property type="entry name" value="ABC_transporter-like_ATP-bd"/>
</dbReference>
<dbReference type="InterPro" id="IPR017871">
    <property type="entry name" value="ABC_transporter-like_CS"/>
</dbReference>
<dbReference type="InterPro" id="IPR015855">
    <property type="entry name" value="ABC_transpr_MalK-like"/>
</dbReference>
<dbReference type="InterPro" id="IPR047641">
    <property type="entry name" value="ABC_transpr_MalK/UgpC-like"/>
</dbReference>
<dbReference type="InterPro" id="IPR008995">
    <property type="entry name" value="Mo/tungstate-bd_C_term_dom"/>
</dbReference>
<dbReference type="InterPro" id="IPR012340">
    <property type="entry name" value="NA-bd_OB-fold"/>
</dbReference>
<dbReference type="InterPro" id="IPR027417">
    <property type="entry name" value="P-loop_NTPase"/>
</dbReference>
<dbReference type="InterPro" id="IPR013611">
    <property type="entry name" value="Transp-assoc_OB_typ2"/>
</dbReference>
<dbReference type="NCBIfam" id="NF008653">
    <property type="entry name" value="PRK11650.1"/>
    <property type="match status" value="1"/>
</dbReference>
<dbReference type="PANTHER" id="PTHR43875">
    <property type="entry name" value="MALTODEXTRIN IMPORT ATP-BINDING PROTEIN MSMX"/>
    <property type="match status" value="1"/>
</dbReference>
<dbReference type="PANTHER" id="PTHR43875:SF12">
    <property type="entry name" value="SN-GLYCEROL-3-PHOSPHATE IMPORT ATP-BINDING PROTEIN UGPC"/>
    <property type="match status" value="1"/>
</dbReference>
<dbReference type="Pfam" id="PF00005">
    <property type="entry name" value="ABC_tran"/>
    <property type="match status" value="1"/>
</dbReference>
<dbReference type="Pfam" id="PF08402">
    <property type="entry name" value="TOBE_2"/>
    <property type="match status" value="1"/>
</dbReference>
<dbReference type="SMART" id="SM00382">
    <property type="entry name" value="AAA"/>
    <property type="match status" value="1"/>
</dbReference>
<dbReference type="SUPFAM" id="SSF50331">
    <property type="entry name" value="MOP-like"/>
    <property type="match status" value="1"/>
</dbReference>
<dbReference type="SUPFAM" id="SSF52540">
    <property type="entry name" value="P-loop containing nucleoside triphosphate hydrolases"/>
    <property type="match status" value="1"/>
</dbReference>
<dbReference type="PROSITE" id="PS00211">
    <property type="entry name" value="ABC_TRANSPORTER_1"/>
    <property type="match status" value="1"/>
</dbReference>
<dbReference type="PROSITE" id="PS50893">
    <property type="entry name" value="ABC_TRANSPORTER_2"/>
    <property type="match status" value="1"/>
</dbReference>
<dbReference type="PROSITE" id="PS51315">
    <property type="entry name" value="UGPC"/>
    <property type="match status" value="1"/>
</dbReference>
<sequence length="351" mass="38491">MSKIVLDNVRKSYGGNIEVIKGVSLEIADGEFVVLVGPSGCGKSTLLRMIAGLESITSGTISIGERVVNNVEPAERDIAMVFQNYALYPHMTVRENLAYGLKNRKTPKEEIERRIAKAAKALEIEQFLERKPRQLSGGQRQRVAMGRAIVREPAAFLFDEPLSNLDAKLRVQMRVEIKRLQRSLGTTSVYVTHDQMEAMTMADRLVVLNAGHIEQVGTPIELYEKPASTFVATFIGSPSMNLLQSPESAAWQPGRAITLPSGGYTFGVRPEDIRILEEGDQDADGFNAQVRIEAVELVGAESYIHAALSDGKPLIFRVAGRSTHNIDEMVRVGASATDVHIFGADGRRVSD</sequence>